<comment type="function">
    <text evidence="1">Binds to the 23S rRNA.</text>
</comment>
<comment type="similarity">
    <text evidence="1">Belongs to the bacterial ribosomal protein bL9 family.</text>
</comment>
<protein>
    <recommendedName>
        <fullName evidence="1">Large ribosomal subunit protein bL9</fullName>
    </recommendedName>
    <alternativeName>
        <fullName evidence="2">50S ribosomal protein L9</fullName>
    </alternativeName>
</protein>
<accession>A8AU89</accession>
<name>RL9_STRGC</name>
<dbReference type="EMBL" id="CP000725">
    <property type="protein sequence ID" value="ABV09728.1"/>
    <property type="molecule type" value="Genomic_DNA"/>
</dbReference>
<dbReference type="RefSeq" id="WP_011999581.1">
    <property type="nucleotide sequence ID" value="NC_009785.1"/>
</dbReference>
<dbReference type="SMR" id="A8AU89"/>
<dbReference type="STRING" id="467705.SGO_0027"/>
<dbReference type="KEGG" id="sgo:SGO_0027"/>
<dbReference type="eggNOG" id="COG0359">
    <property type="taxonomic scope" value="Bacteria"/>
</dbReference>
<dbReference type="HOGENOM" id="CLU_078938_3_2_9"/>
<dbReference type="Proteomes" id="UP000001131">
    <property type="component" value="Chromosome"/>
</dbReference>
<dbReference type="GO" id="GO:1990904">
    <property type="term" value="C:ribonucleoprotein complex"/>
    <property type="evidence" value="ECO:0007669"/>
    <property type="project" value="UniProtKB-KW"/>
</dbReference>
<dbReference type="GO" id="GO:0005840">
    <property type="term" value="C:ribosome"/>
    <property type="evidence" value="ECO:0007669"/>
    <property type="project" value="UniProtKB-KW"/>
</dbReference>
<dbReference type="GO" id="GO:0019843">
    <property type="term" value="F:rRNA binding"/>
    <property type="evidence" value="ECO:0007669"/>
    <property type="project" value="UniProtKB-UniRule"/>
</dbReference>
<dbReference type="GO" id="GO:0003735">
    <property type="term" value="F:structural constituent of ribosome"/>
    <property type="evidence" value="ECO:0007669"/>
    <property type="project" value="InterPro"/>
</dbReference>
<dbReference type="GO" id="GO:0006412">
    <property type="term" value="P:translation"/>
    <property type="evidence" value="ECO:0007669"/>
    <property type="project" value="UniProtKB-UniRule"/>
</dbReference>
<dbReference type="FunFam" id="3.40.5.10:FF:000002">
    <property type="entry name" value="50S ribosomal protein L9"/>
    <property type="match status" value="1"/>
</dbReference>
<dbReference type="Gene3D" id="3.10.430.100">
    <property type="entry name" value="Ribosomal protein L9, C-terminal domain"/>
    <property type="match status" value="1"/>
</dbReference>
<dbReference type="Gene3D" id="3.40.5.10">
    <property type="entry name" value="Ribosomal protein L9, N-terminal domain"/>
    <property type="match status" value="1"/>
</dbReference>
<dbReference type="HAMAP" id="MF_00503">
    <property type="entry name" value="Ribosomal_bL9"/>
    <property type="match status" value="1"/>
</dbReference>
<dbReference type="InterPro" id="IPR000244">
    <property type="entry name" value="Ribosomal_bL9"/>
</dbReference>
<dbReference type="InterPro" id="IPR009027">
    <property type="entry name" value="Ribosomal_bL9/RNase_H1_N"/>
</dbReference>
<dbReference type="InterPro" id="IPR020594">
    <property type="entry name" value="Ribosomal_bL9_bac/chp"/>
</dbReference>
<dbReference type="InterPro" id="IPR020069">
    <property type="entry name" value="Ribosomal_bL9_C"/>
</dbReference>
<dbReference type="InterPro" id="IPR036791">
    <property type="entry name" value="Ribosomal_bL9_C_sf"/>
</dbReference>
<dbReference type="InterPro" id="IPR020070">
    <property type="entry name" value="Ribosomal_bL9_N"/>
</dbReference>
<dbReference type="InterPro" id="IPR036935">
    <property type="entry name" value="Ribosomal_bL9_N_sf"/>
</dbReference>
<dbReference type="NCBIfam" id="TIGR00158">
    <property type="entry name" value="L9"/>
    <property type="match status" value="1"/>
</dbReference>
<dbReference type="PANTHER" id="PTHR21368">
    <property type="entry name" value="50S RIBOSOMAL PROTEIN L9"/>
    <property type="match status" value="1"/>
</dbReference>
<dbReference type="Pfam" id="PF03948">
    <property type="entry name" value="Ribosomal_L9_C"/>
    <property type="match status" value="1"/>
</dbReference>
<dbReference type="Pfam" id="PF01281">
    <property type="entry name" value="Ribosomal_L9_N"/>
    <property type="match status" value="1"/>
</dbReference>
<dbReference type="SUPFAM" id="SSF55658">
    <property type="entry name" value="L9 N-domain-like"/>
    <property type="match status" value="1"/>
</dbReference>
<dbReference type="SUPFAM" id="SSF55653">
    <property type="entry name" value="Ribosomal protein L9 C-domain"/>
    <property type="match status" value="1"/>
</dbReference>
<dbReference type="PROSITE" id="PS00651">
    <property type="entry name" value="RIBOSOMAL_L9"/>
    <property type="match status" value="1"/>
</dbReference>
<organism>
    <name type="scientific">Streptococcus gordonii (strain Challis / ATCC 35105 / BCRC 15272 / CH1 / DL1 / V288)</name>
    <dbReference type="NCBI Taxonomy" id="467705"/>
    <lineage>
        <taxon>Bacteria</taxon>
        <taxon>Bacillati</taxon>
        <taxon>Bacillota</taxon>
        <taxon>Bacilli</taxon>
        <taxon>Lactobacillales</taxon>
        <taxon>Streptococcaceae</taxon>
        <taxon>Streptococcus</taxon>
    </lineage>
</organism>
<feature type="chain" id="PRO_1000081507" description="Large ribosomal subunit protein bL9">
    <location>
        <begin position="1"/>
        <end position="150"/>
    </location>
</feature>
<reference key="1">
    <citation type="journal article" date="2007" name="J. Bacteriol.">
        <title>Genome-wide transcriptional changes in Streptococcus gordonii in response to competence signaling peptide.</title>
        <authorList>
            <person name="Vickerman M.M."/>
            <person name="Iobst S."/>
            <person name="Jesionowski A.M."/>
            <person name="Gill S.R."/>
        </authorList>
    </citation>
    <scope>NUCLEOTIDE SEQUENCE [LARGE SCALE GENOMIC DNA]</scope>
    <source>
        <strain>Challis / ATCC 35105 / BCRC 15272 / CH1 / DL1 / V288</strain>
    </source>
</reference>
<evidence type="ECO:0000255" key="1">
    <source>
        <dbReference type="HAMAP-Rule" id="MF_00503"/>
    </source>
</evidence>
<evidence type="ECO:0000305" key="2"/>
<proteinExistence type="inferred from homology"/>
<keyword id="KW-1185">Reference proteome</keyword>
<keyword id="KW-0687">Ribonucleoprotein</keyword>
<keyword id="KW-0689">Ribosomal protein</keyword>
<keyword id="KW-0694">RNA-binding</keyword>
<keyword id="KW-0699">rRNA-binding</keyword>
<gene>
    <name evidence="1" type="primary">rplI</name>
    <name type="ordered locus">SGO_0027</name>
</gene>
<sequence length="150" mass="16403">MKVIFLADVKGKGKKGEVKEVPTGYAQNFLIKKNLAKEATAQAIGELRGKQKSEEKAHAELVAEAQAIQAKLAEEATLVEFTEKVGPDGRTFGSITSKKIAEELEKQFGIKLDKRNIKVDSPIRSVGLIDVPVKIYQDITGVINLRVKEG</sequence>